<proteinExistence type="evidence at protein level"/>
<name>ZHD12_ARATH</name>
<keyword id="KW-0238">DNA-binding</keyword>
<keyword id="KW-0371">Homeobox</keyword>
<keyword id="KW-0479">Metal-binding</keyword>
<keyword id="KW-0539">Nucleus</keyword>
<keyword id="KW-1185">Reference proteome</keyword>
<keyword id="KW-0804">Transcription</keyword>
<keyword id="KW-0805">Transcription regulation</keyword>
<keyword id="KW-0862">Zinc</keyword>
<keyword id="KW-0863">Zinc-finger</keyword>
<gene>
    <name type="primary">ZHD12</name>
    <name type="synonym">HB26</name>
    <name type="ordered locus">At5g60480</name>
    <name type="ORF">MUF9.11</name>
</gene>
<organism>
    <name type="scientific">Arabidopsis thaliana</name>
    <name type="common">Mouse-ear cress</name>
    <dbReference type="NCBI Taxonomy" id="3702"/>
    <lineage>
        <taxon>Eukaryota</taxon>
        <taxon>Viridiplantae</taxon>
        <taxon>Streptophyta</taxon>
        <taxon>Embryophyta</taxon>
        <taxon>Tracheophyta</taxon>
        <taxon>Spermatophyta</taxon>
        <taxon>Magnoliopsida</taxon>
        <taxon>eudicotyledons</taxon>
        <taxon>Gunneridae</taxon>
        <taxon>Pentapetalae</taxon>
        <taxon>rosids</taxon>
        <taxon>malvids</taxon>
        <taxon>Brassicales</taxon>
        <taxon>Brassicaceae</taxon>
        <taxon>Camelineae</taxon>
        <taxon>Arabidopsis</taxon>
    </lineage>
</organism>
<evidence type="ECO:0000250" key="1"/>
<evidence type="ECO:0000255" key="2">
    <source>
        <dbReference type="PROSITE-ProRule" id="PRU00856"/>
    </source>
</evidence>
<evidence type="ECO:0000256" key="3">
    <source>
        <dbReference type="SAM" id="MobiDB-lite"/>
    </source>
</evidence>
<evidence type="ECO:0000269" key="4">
    <source>
    </source>
</evidence>
<dbReference type="EMBL" id="AB011483">
    <property type="protein sequence ID" value="BAB08231.1"/>
    <property type="molecule type" value="Genomic_DNA"/>
</dbReference>
<dbReference type="EMBL" id="CP002688">
    <property type="protein sequence ID" value="AED97335.2"/>
    <property type="molecule type" value="Genomic_DNA"/>
</dbReference>
<dbReference type="RefSeq" id="NP_200856.2">
    <property type="nucleotide sequence ID" value="NM_125441.2"/>
</dbReference>
<dbReference type="SMR" id="Q9FKJ9"/>
<dbReference type="BioGRID" id="21413">
    <property type="interactions" value="11"/>
</dbReference>
<dbReference type="FunCoup" id="Q9FKJ9">
    <property type="interactions" value="1"/>
</dbReference>
<dbReference type="IntAct" id="Q9FKJ9">
    <property type="interactions" value="11"/>
</dbReference>
<dbReference type="STRING" id="3702.Q9FKJ9"/>
<dbReference type="iPTMnet" id="Q9FKJ9"/>
<dbReference type="PaxDb" id="3702-AT5G60480.1"/>
<dbReference type="EnsemblPlants" id="AT5G60480.1">
    <property type="protein sequence ID" value="AT5G60480.1"/>
    <property type="gene ID" value="AT5G60480"/>
</dbReference>
<dbReference type="GeneID" id="836169"/>
<dbReference type="Gramene" id="AT5G60480.1">
    <property type="protein sequence ID" value="AT5G60480.1"/>
    <property type="gene ID" value="AT5G60480"/>
</dbReference>
<dbReference type="KEGG" id="ath:AT5G60480"/>
<dbReference type="Araport" id="AT5G60480"/>
<dbReference type="TAIR" id="AT5G60480">
    <property type="gene designation" value="HB26"/>
</dbReference>
<dbReference type="eggNOG" id="ENOG502QWG3">
    <property type="taxonomic scope" value="Eukaryota"/>
</dbReference>
<dbReference type="HOGENOM" id="CLU_039237_2_2_1"/>
<dbReference type="InParanoid" id="Q9FKJ9"/>
<dbReference type="OMA" id="QTIACAR"/>
<dbReference type="OrthoDB" id="1884189at2759"/>
<dbReference type="PhylomeDB" id="Q9FKJ9"/>
<dbReference type="PRO" id="PR:Q9FKJ9"/>
<dbReference type="Proteomes" id="UP000006548">
    <property type="component" value="Chromosome 5"/>
</dbReference>
<dbReference type="ExpressionAtlas" id="Q9FKJ9">
    <property type="expression patterns" value="baseline and differential"/>
</dbReference>
<dbReference type="GO" id="GO:0005634">
    <property type="term" value="C:nucleus"/>
    <property type="evidence" value="ECO:0000250"/>
    <property type="project" value="UniProtKB"/>
</dbReference>
<dbReference type="GO" id="GO:0003677">
    <property type="term" value="F:DNA binding"/>
    <property type="evidence" value="ECO:0000250"/>
    <property type="project" value="TAIR"/>
</dbReference>
<dbReference type="GO" id="GO:0042803">
    <property type="term" value="F:protein homodimerization activity"/>
    <property type="evidence" value="ECO:0000250"/>
    <property type="project" value="UniProtKB"/>
</dbReference>
<dbReference type="GO" id="GO:0008270">
    <property type="term" value="F:zinc ion binding"/>
    <property type="evidence" value="ECO:0007669"/>
    <property type="project" value="UniProtKB-KW"/>
</dbReference>
<dbReference type="FunFam" id="1.10.10.60:FF:000257">
    <property type="entry name" value="Zinc-finger homeodomain protein 2"/>
    <property type="match status" value="1"/>
</dbReference>
<dbReference type="Gene3D" id="1.10.10.60">
    <property type="entry name" value="Homeodomain-like"/>
    <property type="match status" value="1"/>
</dbReference>
<dbReference type="InterPro" id="IPR009057">
    <property type="entry name" value="Homeodomain-like_sf"/>
</dbReference>
<dbReference type="InterPro" id="IPR006455">
    <property type="entry name" value="Homeodomain_ZF_HD"/>
</dbReference>
<dbReference type="InterPro" id="IPR006456">
    <property type="entry name" value="ZF_HD_homeobox_Cys/His_dimer"/>
</dbReference>
<dbReference type="NCBIfam" id="TIGR01565">
    <property type="entry name" value="homeo_ZF_HD"/>
    <property type="match status" value="1"/>
</dbReference>
<dbReference type="NCBIfam" id="TIGR01566">
    <property type="entry name" value="ZF_HD_prot_N"/>
    <property type="match status" value="1"/>
</dbReference>
<dbReference type="PANTHER" id="PTHR31948:SF87">
    <property type="entry name" value="ZINC-FINGER HOMEODOMAIN PROTEIN 12"/>
    <property type="match status" value="1"/>
</dbReference>
<dbReference type="PANTHER" id="PTHR31948">
    <property type="entry name" value="ZINC-FINGER HOMEODOMAIN PROTEIN 2"/>
    <property type="match status" value="1"/>
</dbReference>
<dbReference type="Pfam" id="PF04770">
    <property type="entry name" value="ZF-HD_dimer"/>
    <property type="match status" value="1"/>
</dbReference>
<dbReference type="SUPFAM" id="SSF46689">
    <property type="entry name" value="Homeodomain-like"/>
    <property type="match status" value="1"/>
</dbReference>
<dbReference type="PROSITE" id="PS51523">
    <property type="entry name" value="ZF_HD_DIMER"/>
    <property type="match status" value="1"/>
</dbReference>
<accession>Q9FKJ9</accession>
<accession>F4JYZ9</accession>
<protein>
    <recommendedName>
        <fullName>Zinc-finger homeodomain protein 12</fullName>
        <shortName>AtZHD12</shortName>
    </recommendedName>
    <alternativeName>
        <fullName>Homeobox protein 26</fullName>
        <shortName>AtHB-26</shortName>
    </alternativeName>
</protein>
<reference key="1">
    <citation type="journal article" date="1998" name="DNA Res.">
        <title>Structural analysis of Arabidopsis thaliana chromosome 5. V. Sequence features of the regions of 1,381,565 bp covered by twenty one physically assigned P1 and TAC clones.</title>
        <authorList>
            <person name="Kaneko T."/>
            <person name="Kotani H."/>
            <person name="Nakamura Y."/>
            <person name="Sato S."/>
            <person name="Asamizu E."/>
            <person name="Miyajima N."/>
            <person name="Tabata S."/>
        </authorList>
    </citation>
    <scope>NUCLEOTIDE SEQUENCE [LARGE SCALE GENOMIC DNA]</scope>
    <source>
        <strain>cv. Columbia</strain>
    </source>
</reference>
<reference key="2">
    <citation type="journal article" date="2017" name="Plant J.">
        <title>Araport11: a complete reannotation of the Arabidopsis thaliana reference genome.</title>
        <authorList>
            <person name="Cheng C.Y."/>
            <person name="Krishnakumar V."/>
            <person name="Chan A.P."/>
            <person name="Thibaud-Nissen F."/>
            <person name="Schobel S."/>
            <person name="Town C.D."/>
        </authorList>
    </citation>
    <scope>GENOME REANNOTATION</scope>
    <source>
        <strain>cv. Columbia</strain>
    </source>
</reference>
<reference key="3">
    <citation type="journal article" date="2006" name="Plant Physiol.">
        <title>The Arabidopsis zinc finger-homeodomain genes encode proteins with unique biochemical properties that are coordinately expressed during floral development.</title>
        <authorList>
            <person name="Tan Q.K."/>
            <person name="Irish V.F."/>
        </authorList>
    </citation>
    <scope>INTERACTION WITH ZHD11</scope>
    <scope>GENE FAMILY</scope>
</reference>
<reference key="4">
    <citation type="journal article" date="2008" name="J. Integr. Plant Biol.">
        <title>Phylogenetic analysis of the plant-specific zinc finger-homeobox and mini zinc finger gene families.</title>
        <authorList>
            <person name="Hu W."/>
            <person name="dePamphilis C.W."/>
            <person name="Ma H."/>
        </authorList>
    </citation>
    <scope>GENE FAMILY</scope>
    <scope>NOMENCLATURE</scope>
</reference>
<reference key="5">
    <citation type="journal article" date="2011" name="J. Biol. Chem.">
        <title>Nuclear import and DNA binding of the ZHD5 transcription factor is modulated by a competitive peptide inhibitor in Arabidopsis.</title>
        <authorList>
            <person name="Hong S.-Y."/>
            <person name="Kim O.-K."/>
            <person name="Kim S.-G."/>
            <person name="Yang M.-S."/>
            <person name="Park C.-M."/>
        </authorList>
    </citation>
    <scope>GENE FAMILY</scope>
    <scope>NOMENCLATURE</scope>
    <source>
        <strain>cv. Columbia</strain>
    </source>
</reference>
<sequence>MSSLSKPNRQFLSPTTNNQDTGREQTIACARDMVVLYNECLKNHAVSLGGHALDGCGEFTPKSTTILTDPPSLRCDACGCHRNFHRRSPSDGFSQHRSPPSPLQLQPLAPVPNLLLSLSSGFFGPSDQEVKNKFTVERDVRKTAMIKKHKRTKFTAEQKVKMRGFAERAGWKINGWDEKWVREFCSEVGIERKVLKVWIHNNKYFNNGRSRDTTSSMSLNLKL</sequence>
<feature type="chain" id="PRO_0000426025" description="Zinc-finger homeodomain protein 12">
    <location>
        <begin position="1"/>
        <end position="223"/>
    </location>
</feature>
<feature type="zinc finger region" description="ZF-HD dimerization-type; degenerate" evidence="2">
    <location>
        <begin position="37"/>
        <end position="88"/>
    </location>
</feature>
<feature type="DNA-binding region" description="Homeobox; atypical">
    <location>
        <begin position="147"/>
        <end position="204"/>
    </location>
</feature>
<feature type="region of interest" description="Disordered" evidence="3">
    <location>
        <begin position="1"/>
        <end position="24"/>
    </location>
</feature>
<feature type="compositionally biased region" description="Polar residues" evidence="3">
    <location>
        <begin position="1"/>
        <end position="20"/>
    </location>
</feature>
<feature type="site" description="Required for DNA-binding" evidence="1">
    <location>
        <position position="199"/>
    </location>
</feature>
<comment type="function">
    <text>Putative transcription factor.</text>
</comment>
<comment type="subunit">
    <text evidence="1 4">Homo- and heterodimer with other ZFHD proteins (By similarity). Interacts with ZHD11.</text>
</comment>
<comment type="subcellular location">
    <subcellularLocation>
        <location evidence="1">Nucleus</location>
    </subcellularLocation>
</comment>
<comment type="domain">
    <text>The homeodomain differs form the typical one by having namely 4 instead of 3 extra amino acids inserted in the loop between helix 1 and helix 2.</text>
</comment>